<sequence>MEQNEREKKGAGAPNSAKAIVEALLFAAGDEGLSLSQIAAVLEVSELEAKAVIEELQQDCRREERGIQLVELGGVFLLATKKEHAPYLKKLVEAPGASPLSQAALETLAIIAYRQPITRAEIEEIRGVKSDKPLQTLMARALIKEVGRAEGTGRPILYGTTPEFLDYFGLKTLEELPPLPEWADDGESEREADLFFEKLAENLSDGQPEYGKLKKNG</sequence>
<evidence type="ECO:0000255" key="1">
    <source>
        <dbReference type="HAMAP-Rule" id="MF_01804"/>
    </source>
</evidence>
<feature type="chain" id="PRO_0000273300" description="Segregation and condensation protein B">
    <location>
        <begin position="1"/>
        <end position="217"/>
    </location>
</feature>
<name>SCPB_GEOKA</name>
<protein>
    <recommendedName>
        <fullName evidence="1">Segregation and condensation protein B</fullName>
    </recommendedName>
</protein>
<gene>
    <name evidence="1" type="primary">scpB</name>
    <name type="ordered locus">GK2290</name>
</gene>
<proteinExistence type="inferred from homology"/>
<keyword id="KW-0131">Cell cycle</keyword>
<keyword id="KW-0132">Cell division</keyword>
<keyword id="KW-0159">Chromosome partition</keyword>
<keyword id="KW-0963">Cytoplasm</keyword>
<keyword id="KW-1185">Reference proteome</keyword>
<accession>Q5KXL1</accession>
<reference key="1">
    <citation type="journal article" date="2004" name="Nucleic Acids Res.">
        <title>Thermoadaptation trait revealed by the genome sequence of thermophilic Geobacillus kaustophilus.</title>
        <authorList>
            <person name="Takami H."/>
            <person name="Takaki Y."/>
            <person name="Chee G.-J."/>
            <person name="Nishi S."/>
            <person name="Shimamura S."/>
            <person name="Suzuki H."/>
            <person name="Matsui S."/>
            <person name="Uchiyama I."/>
        </authorList>
    </citation>
    <scope>NUCLEOTIDE SEQUENCE [LARGE SCALE GENOMIC DNA]</scope>
    <source>
        <strain>HTA426</strain>
    </source>
</reference>
<organism>
    <name type="scientific">Geobacillus kaustophilus (strain HTA426)</name>
    <dbReference type="NCBI Taxonomy" id="235909"/>
    <lineage>
        <taxon>Bacteria</taxon>
        <taxon>Bacillati</taxon>
        <taxon>Bacillota</taxon>
        <taxon>Bacilli</taxon>
        <taxon>Bacillales</taxon>
        <taxon>Anoxybacillaceae</taxon>
        <taxon>Geobacillus</taxon>
        <taxon>Geobacillus thermoleovorans group</taxon>
    </lineage>
</organism>
<dbReference type="EMBL" id="BA000043">
    <property type="protein sequence ID" value="BAD76575.1"/>
    <property type="molecule type" value="Genomic_DNA"/>
</dbReference>
<dbReference type="RefSeq" id="WP_011231772.1">
    <property type="nucleotide sequence ID" value="NC_006510.1"/>
</dbReference>
<dbReference type="SMR" id="Q5KXL1"/>
<dbReference type="STRING" id="235909.GK2290"/>
<dbReference type="GeneID" id="32064139"/>
<dbReference type="KEGG" id="gka:GK2290"/>
<dbReference type="eggNOG" id="COG1386">
    <property type="taxonomic scope" value="Bacteria"/>
</dbReference>
<dbReference type="HOGENOM" id="CLU_045647_5_3_9"/>
<dbReference type="Proteomes" id="UP000001172">
    <property type="component" value="Chromosome"/>
</dbReference>
<dbReference type="GO" id="GO:0005737">
    <property type="term" value="C:cytoplasm"/>
    <property type="evidence" value="ECO:0007669"/>
    <property type="project" value="UniProtKB-SubCell"/>
</dbReference>
<dbReference type="GO" id="GO:0051301">
    <property type="term" value="P:cell division"/>
    <property type="evidence" value="ECO:0007669"/>
    <property type="project" value="UniProtKB-KW"/>
</dbReference>
<dbReference type="GO" id="GO:0051304">
    <property type="term" value="P:chromosome separation"/>
    <property type="evidence" value="ECO:0007669"/>
    <property type="project" value="InterPro"/>
</dbReference>
<dbReference type="GO" id="GO:0006260">
    <property type="term" value="P:DNA replication"/>
    <property type="evidence" value="ECO:0007669"/>
    <property type="project" value="UniProtKB-UniRule"/>
</dbReference>
<dbReference type="Gene3D" id="1.10.10.10">
    <property type="entry name" value="Winged helix-like DNA-binding domain superfamily/Winged helix DNA-binding domain"/>
    <property type="match status" value="2"/>
</dbReference>
<dbReference type="HAMAP" id="MF_01804">
    <property type="entry name" value="ScpB"/>
    <property type="match status" value="1"/>
</dbReference>
<dbReference type="InterPro" id="IPR005234">
    <property type="entry name" value="ScpB_csome_segregation"/>
</dbReference>
<dbReference type="InterPro" id="IPR036388">
    <property type="entry name" value="WH-like_DNA-bd_sf"/>
</dbReference>
<dbReference type="InterPro" id="IPR036390">
    <property type="entry name" value="WH_DNA-bd_sf"/>
</dbReference>
<dbReference type="NCBIfam" id="TIGR00281">
    <property type="entry name" value="SMC-Scp complex subunit ScpB"/>
    <property type="match status" value="1"/>
</dbReference>
<dbReference type="PANTHER" id="PTHR34298">
    <property type="entry name" value="SEGREGATION AND CONDENSATION PROTEIN B"/>
    <property type="match status" value="1"/>
</dbReference>
<dbReference type="PANTHER" id="PTHR34298:SF2">
    <property type="entry name" value="SEGREGATION AND CONDENSATION PROTEIN B"/>
    <property type="match status" value="1"/>
</dbReference>
<dbReference type="Pfam" id="PF04079">
    <property type="entry name" value="SMC_ScpB"/>
    <property type="match status" value="1"/>
</dbReference>
<dbReference type="PIRSF" id="PIRSF019345">
    <property type="entry name" value="ScpB"/>
    <property type="match status" value="1"/>
</dbReference>
<dbReference type="SUPFAM" id="SSF46785">
    <property type="entry name" value="Winged helix' DNA-binding domain"/>
    <property type="match status" value="2"/>
</dbReference>
<comment type="function">
    <text evidence="1">Participates in chromosomal partition during cell division. May act via the formation of a condensin-like complex containing Smc and ScpA that pull DNA away from mid-cell into both cell halves.</text>
</comment>
<comment type="subunit">
    <text evidence="1">Homodimer. Homodimerization may be required to stabilize the binding of ScpA to the Smc head domains. Component of a cohesin-like complex composed of ScpA, ScpB and the Smc homodimer, in which ScpA and ScpB bind to the head domain of Smc. The presence of the three proteins is required for the association of the complex with DNA.</text>
</comment>
<comment type="subcellular location">
    <subcellularLocation>
        <location evidence="1">Cytoplasm</location>
    </subcellularLocation>
    <text evidence="1">Associated with two foci at the outer edges of the nucleoid region in young cells, and at four foci within both cell halves in older cells.</text>
</comment>
<comment type="similarity">
    <text evidence="1">Belongs to the ScpB family.</text>
</comment>